<accession>P59916</accession>
<feature type="chain" id="PRO_0000028522" description="Collagenase">
    <location>
        <begin position="1"/>
        <end position="414"/>
    </location>
</feature>
<sequence length="414" mass="46673">MNVNDFEIMAPVGSYESLMAAIKAGADSVYFGIEGLNMRARSANNFTTEDLYKIAEICRDKGVKSYLTVNTVIYDEDIALMRSVIDAAQKAQISAIIASDVAAMMYANEIGVEVHLSTQLNISNAEALRFYSRFADVVVLARELNMDQVRTIHETIVRDNICGPKGHPVRIEMFAHGALCMAVSGKCYLSLHEHNSSANRGACAQICRRGYTVKDKDSGLELDIENQYIMSPKDLKTIHFINKMMDAGVRVFKIEGRARGPEYVYTVCRCYKEAIEAYCNGTYDEEAIGRWDEQLATVFNRGFWDGYYLGQRLGEWTHRYGSGATRQKIYVGKGIKYFSRLGVAEFEIESGELHIGDEIVITGPTTGVIIQKVEEIRYELQTVEKATKGQRISIPVKEKVRPSDKLYRFDKREE</sequence>
<keyword id="KW-0378">Hydrolase</keyword>
<keyword id="KW-0645">Protease</keyword>
<keyword id="KW-1185">Reference proteome</keyword>
<keyword id="KW-0843">Virulence</keyword>
<proteinExistence type="inferred from homology"/>
<protein>
    <recommendedName>
        <fullName>Collagenase</fullName>
        <ecNumber>3.4.-.-</ecNumber>
    </recommendedName>
</protein>
<reference key="1">
    <citation type="journal article" date="2003" name="J. Bacteriol.">
        <title>Complete genome sequence of the oral pathogenic bacterium Porphyromonas gingivalis strain W83.</title>
        <authorList>
            <person name="Nelson K.E."/>
            <person name="Fleischmann R.D."/>
            <person name="DeBoy R.T."/>
            <person name="Paulsen I.T."/>
            <person name="Fouts D.E."/>
            <person name="Eisen J.A."/>
            <person name="Daugherty S.C."/>
            <person name="Dodson R.J."/>
            <person name="Durkin A.S."/>
            <person name="Gwinn M.L."/>
            <person name="Haft D.H."/>
            <person name="Kolonay J.F."/>
            <person name="Nelson W.C."/>
            <person name="Mason T.M."/>
            <person name="Tallon L."/>
            <person name="Gray J."/>
            <person name="Granger D."/>
            <person name="Tettelin H."/>
            <person name="Dong H."/>
            <person name="Galvin J.L."/>
            <person name="Duncan M.J."/>
            <person name="Dewhirst F.E."/>
            <person name="Fraser C.M."/>
        </authorList>
    </citation>
    <scope>NUCLEOTIDE SEQUENCE [LARGE SCALE GENOMIC DNA]</scope>
    <source>
        <strain>ATCC BAA-308 / W83</strain>
    </source>
</reference>
<evidence type="ECO:0000250" key="1"/>
<evidence type="ECO:0000250" key="2">
    <source>
        <dbReference type="UniProtKB" id="P33437"/>
    </source>
</evidence>
<evidence type="ECO:0000305" key="3"/>
<dbReference type="EC" id="3.4.-.-"/>
<dbReference type="EMBL" id="AE015924">
    <property type="protein sequence ID" value="AAQ66580.1"/>
    <property type="molecule type" value="Genomic_DNA"/>
</dbReference>
<dbReference type="RefSeq" id="WP_010956336.1">
    <property type="nucleotide sequence ID" value="NC_002950.2"/>
</dbReference>
<dbReference type="STRING" id="242619.PG_1542"/>
<dbReference type="MEROPS" id="U32.001"/>
<dbReference type="DNASU" id="2553029"/>
<dbReference type="EnsemblBacteria" id="AAQ66580">
    <property type="protein sequence ID" value="AAQ66580"/>
    <property type="gene ID" value="PG_1542"/>
</dbReference>
<dbReference type="KEGG" id="pgi:PG_1542"/>
<dbReference type="eggNOG" id="COG0826">
    <property type="taxonomic scope" value="Bacteria"/>
</dbReference>
<dbReference type="HOGENOM" id="CLU_011540_0_1_10"/>
<dbReference type="Proteomes" id="UP000000588">
    <property type="component" value="Chromosome"/>
</dbReference>
<dbReference type="GO" id="GO:0008233">
    <property type="term" value="F:peptidase activity"/>
    <property type="evidence" value="ECO:0007669"/>
    <property type="project" value="UniProtKB-KW"/>
</dbReference>
<dbReference type="GO" id="GO:0009058">
    <property type="term" value="P:biosynthetic process"/>
    <property type="evidence" value="ECO:0007669"/>
    <property type="project" value="UniProtKB-ARBA"/>
</dbReference>
<dbReference type="GO" id="GO:0006508">
    <property type="term" value="P:proteolysis"/>
    <property type="evidence" value="ECO:0007669"/>
    <property type="project" value="UniProtKB-KW"/>
</dbReference>
<dbReference type="InterPro" id="IPR001539">
    <property type="entry name" value="Peptidase_U32"/>
</dbReference>
<dbReference type="InterPro" id="IPR051454">
    <property type="entry name" value="RNA/ubiquinone_mod_enzymes"/>
</dbReference>
<dbReference type="InterPro" id="IPR009000">
    <property type="entry name" value="Transl_B-barrel_sf"/>
</dbReference>
<dbReference type="PANTHER" id="PTHR30217">
    <property type="entry name" value="PEPTIDASE U32 FAMILY"/>
    <property type="match status" value="1"/>
</dbReference>
<dbReference type="PANTHER" id="PTHR30217:SF6">
    <property type="entry name" value="TRNA HYDROXYLATION PROTEIN P"/>
    <property type="match status" value="1"/>
</dbReference>
<dbReference type="Pfam" id="PF01136">
    <property type="entry name" value="Peptidase_U32"/>
    <property type="match status" value="1"/>
</dbReference>
<dbReference type="SUPFAM" id="SSF50447">
    <property type="entry name" value="Translation proteins"/>
    <property type="match status" value="1"/>
</dbReference>
<dbReference type="PROSITE" id="PS01276">
    <property type="entry name" value="PEPTIDASE_U32"/>
    <property type="match status" value="1"/>
</dbReference>
<name>PRTC1_PORGI</name>
<gene>
    <name type="primary">prtC</name>
    <name type="ordered locus">PG_1542</name>
</gene>
<comment type="function">
    <text evidence="2">Has collagenase activity. Hydrolyzes type I collagen. May play a role in virulence (By similarity).</text>
</comment>
<comment type="cofactor">
    <cofactor evidence="2">
        <name>a metal cation</name>
        <dbReference type="ChEBI" id="CHEBI:25213"/>
    </cofactor>
</comment>
<comment type="subunit">
    <text evidence="1 2">Homodimer.</text>
</comment>
<comment type="similarity">
    <text evidence="3">Belongs to the peptidase U32 family.</text>
</comment>
<organism>
    <name type="scientific">Porphyromonas gingivalis (strain ATCC BAA-308 / W83)</name>
    <dbReference type="NCBI Taxonomy" id="242619"/>
    <lineage>
        <taxon>Bacteria</taxon>
        <taxon>Pseudomonadati</taxon>
        <taxon>Bacteroidota</taxon>
        <taxon>Bacteroidia</taxon>
        <taxon>Bacteroidales</taxon>
        <taxon>Porphyromonadaceae</taxon>
        <taxon>Porphyromonas</taxon>
    </lineage>
</organism>